<reference key="1">
    <citation type="journal article" date="2011" name="J. Biol. Chem.">
        <title>Iridoid-specific Glucosyltransferase from Gardenia jasminoides.</title>
        <authorList>
            <person name="Nagatoshi M."/>
            <person name="Terasaka K."/>
            <person name="Nagatsu A."/>
            <person name="Mizukami H."/>
        </authorList>
    </citation>
    <scope>NUCLEOTIDE SEQUENCE [MRNA]</scope>
    <scope>FUNCTION</scope>
    <scope>CATALYTIC ACTIVITY</scope>
    <scope>BIOPHYSICOCHEMICAL PROPERTIES</scope>
    <scope>INDUCTION BY METHYL JASMONATE</scope>
    <scope>TISSUE SPECIFICITY</scope>
    <scope>DEVELOPMENTAL STAGE</scope>
</reference>
<organism>
    <name type="scientific">Gardenia jasminoides</name>
    <name type="common">Cape jasmine</name>
    <name type="synonym">Gardenia augusta</name>
    <dbReference type="NCBI Taxonomy" id="114476"/>
    <lineage>
        <taxon>Eukaryota</taxon>
        <taxon>Viridiplantae</taxon>
        <taxon>Streptophyta</taxon>
        <taxon>Embryophyta</taxon>
        <taxon>Tracheophyta</taxon>
        <taxon>Spermatophyta</taxon>
        <taxon>Magnoliopsida</taxon>
        <taxon>eudicotyledons</taxon>
        <taxon>Gunneridae</taxon>
        <taxon>Pentapetalae</taxon>
        <taxon>asterids</taxon>
        <taxon>lamiids</taxon>
        <taxon>Gentianales</taxon>
        <taxon>Rubiaceae</taxon>
        <taxon>Ixoroideae</taxon>
        <taxon>Gardenieae complex</taxon>
        <taxon>Gardenieae - Pavetteae clade</taxon>
        <taxon>Gardenieae</taxon>
        <taxon>Gardenia</taxon>
    </lineage>
</organism>
<dbReference type="EC" id="2.4.1.324"/>
<dbReference type="EMBL" id="AB555732">
    <property type="protein sequence ID" value="BAK55737.1"/>
    <property type="molecule type" value="mRNA"/>
</dbReference>
<dbReference type="SMR" id="F8WKW1"/>
<dbReference type="CAZy" id="GT1">
    <property type="family name" value="Glycosyltransferase Family 1"/>
</dbReference>
<dbReference type="KEGG" id="ag:BAK55737"/>
<dbReference type="GO" id="GO:0080043">
    <property type="term" value="F:quercetin 3-O-glucosyltransferase activity"/>
    <property type="evidence" value="ECO:0007669"/>
    <property type="project" value="TreeGrafter"/>
</dbReference>
<dbReference type="GO" id="GO:0080044">
    <property type="term" value="F:quercetin 7-O-glucosyltransferase activity"/>
    <property type="evidence" value="ECO:0007669"/>
    <property type="project" value="TreeGrafter"/>
</dbReference>
<dbReference type="GO" id="GO:0035251">
    <property type="term" value="F:UDP-glucosyltransferase activity"/>
    <property type="evidence" value="ECO:0000314"/>
    <property type="project" value="UniProtKB"/>
</dbReference>
<dbReference type="CDD" id="cd03784">
    <property type="entry name" value="GT1_Gtf-like"/>
    <property type="match status" value="1"/>
</dbReference>
<dbReference type="FunFam" id="3.40.50.2000:FF:000027">
    <property type="entry name" value="Glycosyltransferase"/>
    <property type="match status" value="1"/>
</dbReference>
<dbReference type="FunFam" id="3.40.50.2000:FF:000055">
    <property type="entry name" value="Glycosyltransferase"/>
    <property type="match status" value="1"/>
</dbReference>
<dbReference type="Gene3D" id="3.40.50.2000">
    <property type="entry name" value="Glycogen Phosphorylase B"/>
    <property type="match status" value="2"/>
</dbReference>
<dbReference type="InterPro" id="IPR002213">
    <property type="entry name" value="UDP_glucos_trans"/>
</dbReference>
<dbReference type="InterPro" id="IPR035595">
    <property type="entry name" value="UDP_glycos_trans_CS"/>
</dbReference>
<dbReference type="PANTHER" id="PTHR11926">
    <property type="entry name" value="GLUCOSYL/GLUCURONOSYL TRANSFERASES"/>
    <property type="match status" value="1"/>
</dbReference>
<dbReference type="PANTHER" id="PTHR11926:SF774">
    <property type="entry name" value="UDP-GLYCOSYLTRANSFERASE 85A1-RELATED"/>
    <property type="match status" value="1"/>
</dbReference>
<dbReference type="Pfam" id="PF00201">
    <property type="entry name" value="UDPGT"/>
    <property type="match status" value="1"/>
</dbReference>
<dbReference type="SUPFAM" id="SSF53756">
    <property type="entry name" value="UDP-Glycosyltransferase/glycogen phosphorylase"/>
    <property type="match status" value="1"/>
</dbReference>
<dbReference type="PROSITE" id="PS00375">
    <property type="entry name" value="UDPGT"/>
    <property type="match status" value="1"/>
</dbReference>
<gene>
    <name type="primary">UGT85A24</name>
    <name type="synonym">UGT2</name>
</gene>
<protein>
    <recommendedName>
        <fullName>7-deoxyloganetin glucosyltransferase</fullName>
        <ecNumber>2.4.1.324</ecNumber>
    </recommendedName>
    <alternativeName>
        <fullName>Genipin glucosyltransferase</fullName>
    </alternativeName>
    <alternativeName>
        <fullName>UDP-glucose glucosyltransferase 2</fullName>
        <shortName>GjUGT2</shortName>
    </alternativeName>
    <alternativeName>
        <fullName>UDP-glycosyltransferase 85A24</fullName>
    </alternativeName>
</protein>
<keyword id="KW-0328">Glycosyltransferase</keyword>
<keyword id="KW-0808">Transferase</keyword>
<feature type="chain" id="PRO_0000430137" description="7-deoxyloganetin glucosyltransferase">
    <location>
        <begin position="1"/>
        <end position="481"/>
    </location>
</feature>
<feature type="active site" description="Proton acceptor" evidence="1">
    <location>
        <position position="22"/>
    </location>
</feature>
<feature type="active site" description="Charge relay" evidence="1">
    <location>
        <position position="126"/>
    </location>
</feature>
<feature type="binding site" evidence="2">
    <location>
        <position position="22"/>
    </location>
    <ligand>
        <name>an anthocyanidin</name>
        <dbReference type="ChEBI" id="CHEBI:143576"/>
    </ligand>
</feature>
<feature type="binding site" evidence="1">
    <location>
        <position position="148"/>
    </location>
    <ligand>
        <name>UDP-alpha-D-glucose</name>
        <dbReference type="ChEBI" id="CHEBI:58885"/>
    </ligand>
</feature>
<feature type="binding site" evidence="1">
    <location>
        <position position="363"/>
    </location>
    <ligand>
        <name>UDP-alpha-D-glucose</name>
        <dbReference type="ChEBI" id="CHEBI:58885"/>
    </ligand>
</feature>
<feature type="binding site" evidence="1">
    <location>
        <position position="378"/>
    </location>
    <ligand>
        <name>UDP-alpha-D-glucose</name>
        <dbReference type="ChEBI" id="CHEBI:58885"/>
    </ligand>
</feature>
<feature type="binding site" evidence="1">
    <location>
        <position position="381"/>
    </location>
    <ligand>
        <name>UDP-alpha-D-glucose</name>
        <dbReference type="ChEBI" id="CHEBI:58885"/>
    </ligand>
</feature>
<feature type="binding site" evidence="1">
    <location>
        <position position="382"/>
    </location>
    <ligand>
        <name>UDP-alpha-D-glucose</name>
        <dbReference type="ChEBI" id="CHEBI:58885"/>
    </ligand>
</feature>
<feature type="binding site" evidence="1">
    <location>
        <position position="383"/>
    </location>
    <ligand>
        <name>UDP-alpha-D-glucose</name>
        <dbReference type="ChEBI" id="CHEBI:58885"/>
    </ligand>
</feature>
<feature type="binding site" evidence="1">
    <location>
        <position position="386"/>
    </location>
    <ligand>
        <name>UDP-alpha-D-glucose</name>
        <dbReference type="ChEBI" id="CHEBI:58885"/>
    </ligand>
</feature>
<feature type="binding site" evidence="2">
    <location>
        <position position="401"/>
    </location>
    <ligand>
        <name>an anthocyanidin</name>
        <dbReference type="ChEBI" id="CHEBI:143576"/>
    </ligand>
</feature>
<feature type="binding site" evidence="1">
    <location>
        <position position="402"/>
    </location>
    <ligand>
        <name>UDP-alpha-D-glucose</name>
        <dbReference type="ChEBI" id="CHEBI:58885"/>
    </ligand>
</feature>
<feature type="binding site" evidence="1">
    <location>
        <position position="403"/>
    </location>
    <ligand>
        <name>UDP-alpha-D-glucose</name>
        <dbReference type="ChEBI" id="CHEBI:58885"/>
    </ligand>
</feature>
<sequence>MGSISLPEKHHAVCIPYPAQGHINPMLKLAKILHHKGFHITFVNTEFNHKRLLKSRGPDALNGLPDFQFKTIPDGLPPSDVDATQDIPSLCESTTTRCLDPFRNLLAELNGPSSSQVPPVSCIVSDGVMSFTLEAAAELGVPEILFWTTSACGFLGYMHYAKLIEKGLTPLKDASYLSNGYLEQSLDWIPGMKDIRLKDLPSFLRTTNPDDYMVKFVLQETERAKKASAIILNTFQELEDDVINALSAILPPIYTIGPLQFLQKEVKDERLSVLGSNLWKEEPECLDWLDSKDPNSVVYVNFGSITVMTPGQLVEFAWGLANSKQTFLWIIRPDLVSGDSAILPPEFLEETKDRGLLASWCPQEQVLSHPAIGGFLTHSGWNSTLESICSGVPMICWPFFAEQQTNCWFCCTKWYNGLEIDNNVKRDEVESLVTELMVGEKGMDMKKKALEWKNKAEEAAKSSGGSSYSNLEKVVQVLLSK</sequence>
<name>UGT2_GARJA</name>
<accession>F8WKW1</accession>
<comment type="function">
    <text evidence="3">Iridoid glucosyltransferase acting on genipin and 7-deoxyloganetin. No activity with 7-deoxyloganetic acid. Involved in geniposide biosynthesis.</text>
</comment>
<comment type="catalytic activity">
    <reaction evidence="3">
        <text>7-deoxyloganetin + UDP-alpha-D-glucose = 7-deoxyloganin + UDP + H(+)</text>
        <dbReference type="Rhea" id="RHEA:39899"/>
        <dbReference type="ChEBI" id="CHEBI:15378"/>
        <dbReference type="ChEBI" id="CHEBI:18370"/>
        <dbReference type="ChEBI" id="CHEBI:58223"/>
        <dbReference type="ChEBI" id="CHEBI:58885"/>
        <dbReference type="ChEBI" id="CHEBI:76849"/>
        <dbReference type="EC" id="2.4.1.324"/>
    </reaction>
</comment>
<comment type="biophysicochemical properties">
    <kinetics>
        <KM evidence="3">8.82 mM for genipin</KM>
        <KM evidence="3">0.61 mM for 7-deoxyloganetin</KM>
        <KM evidence="3">0.17 mM for UPD-glucose</KM>
        <text>kcat is 1.04 sec(-1) for genipin. kcat is 0.13 sec(-1) for 7-deoxyloganetin. kcat is 0.16 sec(-1) for UPD-glucose.</text>
    </kinetics>
</comment>
<comment type="tissue specificity">
    <text evidence="3">Ubiquitous. Very low expression in stems.</text>
</comment>
<comment type="developmental stage">
    <text evidence="3">Up-regulated during the early stage of fruit ripening.</text>
</comment>
<comment type="induction">
    <text evidence="3">Up-regulated by methyl jasmonate.</text>
</comment>
<comment type="similarity">
    <text evidence="4">Belongs to the UDP-glycosyltransferase family.</text>
</comment>
<proteinExistence type="evidence at protein level"/>
<evidence type="ECO:0000250" key="1">
    <source>
        <dbReference type="UniProtKB" id="A0A0A1HA03"/>
    </source>
</evidence>
<evidence type="ECO:0000250" key="2">
    <source>
        <dbReference type="UniProtKB" id="P51094"/>
    </source>
</evidence>
<evidence type="ECO:0000269" key="3">
    <source>
    </source>
</evidence>
<evidence type="ECO:0000305" key="4"/>